<evidence type="ECO:0000250" key="1">
    <source>
        <dbReference type="UniProtKB" id="P38182"/>
    </source>
</evidence>
<evidence type="ECO:0000269" key="2">
    <source>
    </source>
</evidence>
<evidence type="ECO:0000269" key="3">
    <source>
    </source>
</evidence>
<evidence type="ECO:0000269" key="4">
    <source>
    </source>
</evidence>
<evidence type="ECO:0000269" key="5">
    <source>
    </source>
</evidence>
<evidence type="ECO:0000269" key="6">
    <source>
    </source>
</evidence>
<evidence type="ECO:0000305" key="7"/>
<evidence type="ECO:0000305" key="8">
    <source>
    </source>
</evidence>
<protein>
    <recommendedName>
        <fullName>Autophagy-related protein 8</fullName>
    </recommendedName>
    <alternativeName>
        <fullName>Autophagy-related ubiquitin-like modifier ATG8</fullName>
    </alternativeName>
</protein>
<proteinExistence type="evidence at transcript level"/>
<name>ATG8_CANAL</name>
<dbReference type="EMBL" id="CP017623">
    <property type="protein sequence ID" value="AOW26235.1"/>
    <property type="molecule type" value="Genomic_DNA"/>
</dbReference>
<dbReference type="SMR" id="P0C075"/>
<dbReference type="FunCoup" id="P0C075">
    <property type="interactions" value="594"/>
</dbReference>
<dbReference type="STRING" id="237561.P0C075"/>
<dbReference type="EnsemblFungi" id="C1_05700W_A-T">
    <property type="protein sequence ID" value="C1_05700W_A-T-p1"/>
    <property type="gene ID" value="C1_05700W_A"/>
</dbReference>
<dbReference type="KEGG" id="cal:CAALFM_C105700WA"/>
<dbReference type="CGD" id="CAL0000182486">
    <property type="gene designation" value="AUT7"/>
</dbReference>
<dbReference type="VEuPathDB" id="FungiDB:C1_05700W_A"/>
<dbReference type="eggNOG" id="KOG1654">
    <property type="taxonomic scope" value="Eukaryota"/>
</dbReference>
<dbReference type="InParanoid" id="P0C075"/>
<dbReference type="OMA" id="AVYQEHK"/>
<dbReference type="OrthoDB" id="6738456at2759"/>
<dbReference type="Proteomes" id="UP000000559">
    <property type="component" value="Chromosome 1"/>
</dbReference>
<dbReference type="GO" id="GO:0000421">
    <property type="term" value="C:autophagosome membrane"/>
    <property type="evidence" value="ECO:0000318"/>
    <property type="project" value="GO_Central"/>
</dbReference>
<dbReference type="GO" id="GO:0031410">
    <property type="term" value="C:cytoplasmic vesicle"/>
    <property type="evidence" value="ECO:0007669"/>
    <property type="project" value="UniProtKB-KW"/>
</dbReference>
<dbReference type="GO" id="GO:0000329">
    <property type="term" value="C:fungal-type vacuole membrane"/>
    <property type="evidence" value="ECO:0000318"/>
    <property type="project" value="GO_Central"/>
</dbReference>
<dbReference type="GO" id="GO:0008429">
    <property type="term" value="F:phosphatidylethanolamine binding"/>
    <property type="evidence" value="ECO:0000318"/>
    <property type="project" value="GO_Central"/>
</dbReference>
<dbReference type="GO" id="GO:0000045">
    <property type="term" value="P:autophagosome assembly"/>
    <property type="evidence" value="ECO:0000318"/>
    <property type="project" value="GO_Central"/>
</dbReference>
<dbReference type="GO" id="GO:0097352">
    <property type="term" value="P:autophagosome maturation"/>
    <property type="evidence" value="ECO:0000318"/>
    <property type="project" value="GO_Central"/>
</dbReference>
<dbReference type="GO" id="GO:0006995">
    <property type="term" value="P:cellular response to nitrogen starvation"/>
    <property type="evidence" value="ECO:0000318"/>
    <property type="project" value="GO_Central"/>
</dbReference>
<dbReference type="GO" id="GO:0030968">
    <property type="term" value="P:endoplasmic reticulum unfolded protein response"/>
    <property type="evidence" value="ECO:0000316"/>
    <property type="project" value="CGD"/>
</dbReference>
<dbReference type="GO" id="GO:0000423">
    <property type="term" value="P:mitophagy"/>
    <property type="evidence" value="ECO:0000318"/>
    <property type="project" value="GO_Central"/>
</dbReference>
<dbReference type="GO" id="GO:0015031">
    <property type="term" value="P:protein transport"/>
    <property type="evidence" value="ECO:0007669"/>
    <property type="project" value="UniProtKB-KW"/>
</dbReference>
<dbReference type="CDD" id="cd16128">
    <property type="entry name" value="Ubl_ATG8"/>
    <property type="match status" value="1"/>
</dbReference>
<dbReference type="FunFam" id="3.10.20.90:FF:000010">
    <property type="entry name" value="Autophagy-related protein"/>
    <property type="match status" value="1"/>
</dbReference>
<dbReference type="Gene3D" id="3.10.20.90">
    <property type="entry name" value="Phosphatidylinositol 3-kinase Catalytic Subunit, Chain A, domain 1"/>
    <property type="match status" value="1"/>
</dbReference>
<dbReference type="InterPro" id="IPR004241">
    <property type="entry name" value="Atg8-like"/>
</dbReference>
<dbReference type="InterPro" id="IPR029071">
    <property type="entry name" value="Ubiquitin-like_domsf"/>
</dbReference>
<dbReference type="PANTHER" id="PTHR10969">
    <property type="entry name" value="MICROTUBULE-ASSOCIATED PROTEINS 1A/1B LIGHT CHAIN 3-RELATED"/>
    <property type="match status" value="1"/>
</dbReference>
<dbReference type="Pfam" id="PF02991">
    <property type="entry name" value="ATG8"/>
    <property type="match status" value="1"/>
</dbReference>
<dbReference type="SUPFAM" id="SSF54236">
    <property type="entry name" value="Ubiquitin-like"/>
    <property type="match status" value="1"/>
</dbReference>
<sequence length="135" mass="15643">MRSQFKDEHPFEKRQAEAARIAQRFKDRVPVICEKVENSDIPEIDKRKYLVPVDLTVGQFVYVIRKRIKLPSEKAIFIFVNDILPPTAALISTIYEEHKDEDGFLYVLYSGENTFGEKLAIDISSLDFSDIPDYV</sequence>
<keyword id="KW-0072">Autophagy</keyword>
<keyword id="KW-0968">Cytoplasmic vesicle</keyword>
<keyword id="KW-0449">Lipoprotein</keyword>
<keyword id="KW-0472">Membrane</keyword>
<keyword id="KW-0653">Protein transport</keyword>
<keyword id="KW-1185">Reference proteome</keyword>
<keyword id="KW-0813">Transport</keyword>
<keyword id="KW-0833">Ubl conjugation pathway</keyword>
<keyword id="KW-0926">Vacuole</keyword>
<reference key="1">
    <citation type="journal article" date="2004" name="Proc. Natl. Acad. Sci. U.S.A.">
        <title>The diploid genome sequence of Candida albicans.</title>
        <authorList>
            <person name="Jones T."/>
            <person name="Federspiel N.A."/>
            <person name="Chibana H."/>
            <person name="Dungan J."/>
            <person name="Kalman S."/>
            <person name="Magee B.B."/>
            <person name="Newport G."/>
            <person name="Thorstenson Y.R."/>
            <person name="Agabian N."/>
            <person name="Magee P.T."/>
            <person name="Davis R.W."/>
            <person name="Scherer S."/>
        </authorList>
    </citation>
    <scope>NUCLEOTIDE SEQUENCE [LARGE SCALE GENOMIC DNA]</scope>
    <source>
        <strain>SC5314 / ATCC MYA-2876</strain>
    </source>
</reference>
<reference key="2">
    <citation type="journal article" date="2007" name="Genome Biol.">
        <title>Assembly of the Candida albicans genome into sixteen supercontigs aligned on the eight chromosomes.</title>
        <authorList>
            <person name="van het Hoog M."/>
            <person name="Rast T.J."/>
            <person name="Martchenko M."/>
            <person name="Grindle S."/>
            <person name="Dignard D."/>
            <person name="Hogues H."/>
            <person name="Cuomo C."/>
            <person name="Berriman M."/>
            <person name="Scherer S."/>
            <person name="Magee B.B."/>
            <person name="Whiteway M."/>
            <person name="Chibana H."/>
            <person name="Nantel A."/>
            <person name="Magee P.T."/>
        </authorList>
    </citation>
    <scope>GENOME REANNOTATION</scope>
    <source>
        <strain>SC5314 / ATCC MYA-2876</strain>
    </source>
</reference>
<reference key="3">
    <citation type="journal article" date="2013" name="Genome Biol.">
        <title>Assembly of a phased diploid Candida albicans genome facilitates allele-specific measurements and provides a simple model for repeat and indel structure.</title>
        <authorList>
            <person name="Muzzey D."/>
            <person name="Schwartz K."/>
            <person name="Weissman J.S."/>
            <person name="Sherlock G."/>
        </authorList>
    </citation>
    <scope>NUCLEOTIDE SEQUENCE [LARGE SCALE GENOMIC DNA]</scope>
    <scope>GENOME REANNOTATION</scope>
    <source>
        <strain>SC5314 / ATCC MYA-2876</strain>
    </source>
</reference>
<reference key="4">
    <citation type="journal article" date="2012" name="Cell">
        <title>A recently evolved transcriptional network controls biofilm development in Candida albicans.</title>
        <authorList>
            <person name="Nobile C.J."/>
            <person name="Fox E.P."/>
            <person name="Nett J.E."/>
            <person name="Sorrells T.R."/>
            <person name="Mitrovich Q.M."/>
            <person name="Hernday A.D."/>
            <person name="Tuch B.B."/>
            <person name="Andes D.R."/>
            <person name="Johnson A.D."/>
        </authorList>
    </citation>
    <scope>INDUCTION</scope>
</reference>
<reference key="5">
    <citation type="journal article" date="2019" name="Biochem. Biophys. Res. Commun.">
        <title>Function of Atg11 in non-selective autophagy and selective autophagy of Candida albicans.</title>
        <authorList>
            <person name="Cui L."/>
            <person name="Zhao H."/>
            <person name="Yin Y."/>
            <person name="Liang C."/>
            <person name="Mao X."/>
            <person name="Liu Y."/>
            <person name="Yu Q."/>
            <person name="Li M."/>
        </authorList>
    </citation>
    <scope>SUBCELLULAR LOCATION</scope>
</reference>
<reference key="6">
    <citation type="journal article" date="2016" name="Fungal Genet. Biol.">
        <title>The malfunction of peroxisome has an impact on the oxidative stress sensitivity in Candida albicans.</title>
        <authorList>
            <person name="Chen Y."/>
            <person name="Yu Q."/>
            <person name="Wang H."/>
            <person name="Dong Y."/>
            <person name="Jia C."/>
            <person name="Zhang B."/>
            <person name="Xiao C."/>
            <person name="Zhang B."/>
            <person name="Xing L."/>
            <person name="Li M."/>
        </authorList>
    </citation>
    <scope>FUNCTION</scope>
    <scope>DISRUPTION PHENOTYPE</scope>
</reference>
<reference key="7">
    <citation type="journal article" date="2018" name="Int. J. Med. Microbiol.">
        <title>Stress-associated endoplasmic reticulum protein 1 (SERP1) and Atg8 synergistically regulate unfolded protein response (UPR) that is independent on autophagy in Candida albicans.</title>
        <authorList>
            <person name="Li J."/>
            <person name="Yu Q."/>
            <person name="Zhang B."/>
            <person name="Xiao C."/>
            <person name="Ma T."/>
            <person name="Yi X."/>
            <person name="Liang C."/>
            <person name="Li M."/>
        </authorList>
    </citation>
    <scope>FUNCTION</scope>
    <scope>DISRUPTION PHENOTYPE</scope>
</reference>
<reference key="8">
    <citation type="journal article" date="2023" name="Res. Microbiol.">
        <title>Atg8 and Ire1 in combination regulate the autophagy-related endoplasmic reticulum stress response in Candida albicans.</title>
        <authorList>
            <person name="Du J."/>
            <person name="Zhao H."/>
            <person name="Zhu M."/>
            <person name="Dong Y."/>
            <person name="Peng L."/>
            <person name="Li J."/>
            <person name="Zhao Q."/>
            <person name="Yu Q."/>
            <person name="Li M."/>
        </authorList>
    </citation>
    <scope>FUNCTION</scope>
</reference>
<accession>P0C075</accession>
<accession>A0A1D8PDM1</accession>
<organism>
    <name type="scientific">Candida albicans (strain SC5314 / ATCC MYA-2876)</name>
    <name type="common">Yeast</name>
    <dbReference type="NCBI Taxonomy" id="237561"/>
    <lineage>
        <taxon>Eukaryota</taxon>
        <taxon>Fungi</taxon>
        <taxon>Dikarya</taxon>
        <taxon>Ascomycota</taxon>
        <taxon>Saccharomycotina</taxon>
        <taxon>Pichiomycetes</taxon>
        <taxon>Debaryomycetaceae</taxon>
        <taxon>Candida/Lodderomyces clade</taxon>
        <taxon>Candida</taxon>
    </lineage>
</organism>
<feature type="chain" id="PRO_0000017210" description="Autophagy-related protein 8">
    <location>
        <begin position="1"/>
        <end position="116"/>
    </location>
</feature>
<feature type="propeptide" id="PRO_0000017211" description="Removed in mature form" evidence="1">
    <location>
        <begin position="117"/>
        <end position="135"/>
    </location>
</feature>
<feature type="site" description="Cleavage; by ATG4" evidence="1">
    <location>
        <begin position="116"/>
        <end position="117"/>
    </location>
</feature>
<feature type="lipid moiety-binding region" description="Phosphatidylethanolamine amidated glycine" evidence="1">
    <location>
        <position position="116"/>
    </location>
</feature>
<comment type="function">
    <text evidence="1 3 4 6">Ubiquitin-like modifier involved in autophagosome formation (By similarity). The atg8-PE conjugate mediates tethering between adjacent membranes and stimulates membrane hemifusion, leading to expansion of the autophagosomal membrane during autophagy (By similarity). With atg4, mediates the delivery of the autophagosomes to the vacuole via the microtubule cytoskeleton (By similarity). Required for selective autophagic degradation of the nucleus (nucleophagy) as well as for mitophagy which contributes to regulate mitochondrial quantity and quality by eliminating the mitochondria to a basal level to fulfill cellular energy requirements and preventing excess ROS production (By similarity). Also participates in membrane fusion events that take place in the early secretory pathway (By similarity). Regulates autophagy-related endoplasmic reticulum stress response (PubMed:29544880, PubMed:36328097). Also involved in resistance to oxidative stress (PubMed:27473887). Is essential for virulence (PubMed:29544880).</text>
</comment>
<comment type="subcellular location">
    <subcellularLocation>
        <location evidence="5">Cytoplasmic vesicle</location>
        <location evidence="5">Autophagosome membrane</location>
        <topology evidence="8">Lipid-anchor</topology>
    </subcellularLocation>
    <subcellularLocation>
        <location evidence="5">Vacuole membrane</location>
        <topology evidence="8">Lipid-anchor</topology>
    </subcellularLocation>
</comment>
<comment type="induction">
    <text evidence="2">Induced during biofilm formation.</text>
</comment>
<comment type="PTM">
    <text evidence="1">The C-terminal 19 residues are removed to expose Gly-116 at the C-terminus. The C-terminal Gly is then amidated with phosphatidylethanolamine by an activating system similar to that for ubiquitin.</text>
</comment>
<comment type="disruption phenotype">
    <text evidence="3 4">Attenuates tolerance to oxidative stress when PEX1 is also deleted (PubMed:27473887). Leads to hypersensitivity to ER stress and causes the loss of virulence when YSY6 is also deleted (PubMed:29544880).</text>
</comment>
<comment type="similarity">
    <text evidence="7">Belongs to the ATG8 family.</text>
</comment>
<gene>
    <name type="primary">ATG8</name>
    <name type="ordered locus">CAALFM_C105700WA</name>
    <name type="ORF">CaO19.10016.1</name>
    <name type="ORF">CaO19.2480.1</name>
</gene>